<evidence type="ECO:0000250" key="1"/>
<evidence type="ECO:0000250" key="2">
    <source>
        <dbReference type="UniProtKB" id="P00157"/>
    </source>
</evidence>
<evidence type="ECO:0000255" key="3">
    <source>
        <dbReference type="PROSITE-ProRule" id="PRU00967"/>
    </source>
</evidence>
<evidence type="ECO:0000255" key="4">
    <source>
        <dbReference type="PROSITE-ProRule" id="PRU00968"/>
    </source>
</evidence>
<accession>O79520</accession>
<dbReference type="EMBL" id="U94797">
    <property type="protein sequence ID" value="AAC32984.1"/>
    <property type="molecule type" value="Genomic_DNA"/>
</dbReference>
<dbReference type="SMR" id="O79520"/>
<dbReference type="GO" id="GO:0005743">
    <property type="term" value="C:mitochondrial inner membrane"/>
    <property type="evidence" value="ECO:0007669"/>
    <property type="project" value="UniProtKB-SubCell"/>
</dbReference>
<dbReference type="GO" id="GO:0045275">
    <property type="term" value="C:respiratory chain complex III"/>
    <property type="evidence" value="ECO:0007669"/>
    <property type="project" value="InterPro"/>
</dbReference>
<dbReference type="GO" id="GO:0046872">
    <property type="term" value="F:metal ion binding"/>
    <property type="evidence" value="ECO:0007669"/>
    <property type="project" value="UniProtKB-KW"/>
</dbReference>
<dbReference type="GO" id="GO:0008121">
    <property type="term" value="F:ubiquinol-cytochrome-c reductase activity"/>
    <property type="evidence" value="ECO:0007669"/>
    <property type="project" value="InterPro"/>
</dbReference>
<dbReference type="GO" id="GO:0006122">
    <property type="term" value="P:mitochondrial electron transport, ubiquinol to cytochrome c"/>
    <property type="evidence" value="ECO:0007669"/>
    <property type="project" value="TreeGrafter"/>
</dbReference>
<dbReference type="CDD" id="cd00290">
    <property type="entry name" value="cytochrome_b_C"/>
    <property type="match status" value="1"/>
</dbReference>
<dbReference type="CDD" id="cd00284">
    <property type="entry name" value="Cytochrome_b_N"/>
    <property type="match status" value="1"/>
</dbReference>
<dbReference type="FunFam" id="1.20.810.10:FF:000002">
    <property type="entry name" value="Cytochrome b"/>
    <property type="match status" value="1"/>
</dbReference>
<dbReference type="Gene3D" id="1.20.810.10">
    <property type="entry name" value="Cytochrome Bc1 Complex, Chain C"/>
    <property type="match status" value="1"/>
</dbReference>
<dbReference type="InterPro" id="IPR005798">
    <property type="entry name" value="Cyt_b/b6_C"/>
</dbReference>
<dbReference type="InterPro" id="IPR036150">
    <property type="entry name" value="Cyt_b/b6_C_sf"/>
</dbReference>
<dbReference type="InterPro" id="IPR005797">
    <property type="entry name" value="Cyt_b/b6_N"/>
</dbReference>
<dbReference type="InterPro" id="IPR027387">
    <property type="entry name" value="Cytb/b6-like_sf"/>
</dbReference>
<dbReference type="InterPro" id="IPR030689">
    <property type="entry name" value="Cytochrome_b"/>
</dbReference>
<dbReference type="InterPro" id="IPR048260">
    <property type="entry name" value="Cytochrome_b_C_euk/bac"/>
</dbReference>
<dbReference type="InterPro" id="IPR048259">
    <property type="entry name" value="Cytochrome_b_N_euk/bac"/>
</dbReference>
<dbReference type="InterPro" id="IPR016174">
    <property type="entry name" value="Di-haem_cyt_TM"/>
</dbReference>
<dbReference type="PANTHER" id="PTHR19271">
    <property type="entry name" value="CYTOCHROME B"/>
    <property type="match status" value="1"/>
</dbReference>
<dbReference type="PANTHER" id="PTHR19271:SF16">
    <property type="entry name" value="CYTOCHROME B"/>
    <property type="match status" value="1"/>
</dbReference>
<dbReference type="Pfam" id="PF00032">
    <property type="entry name" value="Cytochrom_B_C"/>
    <property type="match status" value="1"/>
</dbReference>
<dbReference type="Pfam" id="PF00033">
    <property type="entry name" value="Cytochrome_B"/>
    <property type="match status" value="1"/>
</dbReference>
<dbReference type="PIRSF" id="PIRSF038885">
    <property type="entry name" value="COB"/>
    <property type="match status" value="1"/>
</dbReference>
<dbReference type="SUPFAM" id="SSF81648">
    <property type="entry name" value="a domain/subunit of cytochrome bc1 complex (Ubiquinol-cytochrome c reductase)"/>
    <property type="match status" value="1"/>
</dbReference>
<dbReference type="SUPFAM" id="SSF81342">
    <property type="entry name" value="Transmembrane di-heme cytochromes"/>
    <property type="match status" value="1"/>
</dbReference>
<dbReference type="PROSITE" id="PS51003">
    <property type="entry name" value="CYTB_CTER"/>
    <property type="match status" value="1"/>
</dbReference>
<dbReference type="PROSITE" id="PS51002">
    <property type="entry name" value="CYTB_NTER"/>
    <property type="match status" value="1"/>
</dbReference>
<keyword id="KW-0249">Electron transport</keyword>
<keyword id="KW-0349">Heme</keyword>
<keyword id="KW-0408">Iron</keyword>
<keyword id="KW-0472">Membrane</keyword>
<keyword id="KW-0479">Metal-binding</keyword>
<keyword id="KW-0496">Mitochondrion</keyword>
<keyword id="KW-0999">Mitochondrion inner membrane</keyword>
<keyword id="KW-0679">Respiratory chain</keyword>
<keyword id="KW-0812">Transmembrane</keyword>
<keyword id="KW-1133">Transmembrane helix</keyword>
<keyword id="KW-0813">Transport</keyword>
<keyword id="KW-0830">Ubiquinone</keyword>
<proteinExistence type="inferred from homology"/>
<reference key="1">
    <citation type="journal article" date="1998" name="Auk">
        <title>Phylogenetic relationships among trogons.</title>
        <authorList>
            <person name="Espinosa de los Monteros A."/>
        </authorList>
    </citation>
    <scope>NUCLEOTIDE SEQUENCE [GENOMIC DNA]</scope>
</reference>
<comment type="function">
    <text evidence="2">Component of the ubiquinol-cytochrome c reductase complex (complex III or cytochrome b-c1 complex) that is part of the mitochondrial respiratory chain. The b-c1 complex mediates electron transfer from ubiquinol to cytochrome c. Contributes to the generation of a proton gradient across the mitochondrial membrane that is then used for ATP synthesis.</text>
</comment>
<comment type="cofactor">
    <cofactor evidence="2">
        <name>heme b</name>
        <dbReference type="ChEBI" id="CHEBI:60344"/>
    </cofactor>
    <text evidence="2">Binds 2 heme b groups non-covalently.</text>
</comment>
<comment type="subunit">
    <text evidence="2">The cytochrome bc1 complex contains 11 subunits: 3 respiratory subunits (MT-CYB, CYC1 and UQCRFS1), 2 core proteins (UQCRC1 and UQCRC2) and 6 low-molecular weight proteins (UQCRH/QCR6, UQCRB/QCR7, UQCRQ/QCR8, UQCR10/QCR9, UQCR11/QCR10 and a cleavage product of UQCRFS1). This cytochrome bc1 complex then forms a dimer.</text>
</comment>
<comment type="subcellular location">
    <subcellularLocation>
        <location evidence="2">Mitochondrion inner membrane</location>
        <topology evidence="2">Multi-pass membrane protein</topology>
    </subcellularLocation>
</comment>
<comment type="miscellaneous">
    <text evidence="1">Heme 1 (or BL or b562) is low-potential and absorbs at about 562 nm, and heme 2 (or BH or b566) is high-potential and absorbs at about 566 nm.</text>
</comment>
<comment type="similarity">
    <text evidence="3 4">Belongs to the cytochrome b family.</text>
</comment>
<comment type="caution">
    <text evidence="2">The full-length protein contains only eight transmembrane helices, not nine as predicted by bioinformatics tools.</text>
</comment>
<sequence>MAPNIRKHHPLLKMINNSLIDLPTPSNISAWWNFGSLLGICLMTQILTGLLLAAHYTPDTSLAFSSVAHTCRNVQYGWLIRNLHANGASFFFICIYLHIGRGFYYGSYLYKETWNTGVVLLLTLMATAFVGYVLPWGQMSFWGATVITNLFSAIPYIGQTLVEWAWGGFSVDNPTLTRFFTLHFLLPFMISGLTIIHLTFLHESGSNNPLGITSNSDKIPFHPYFSLKDILGFTIMLLLLTSIALFSPNLLGDPENFTPANPLVTPPHIKPEWYFLFAYAILRSIPNKLGGVLALAASVLILFLAPFLHKSKQRTMTFRPLSQLLFWLLVANLMILTWIGSQPVEHPFIIIGQLASITYFTIILILFPITSALENKMLKY</sequence>
<organism>
    <name type="scientific">Harpactes diardii</name>
    <name type="common">Diard's trogon</name>
    <dbReference type="NCBI Taxonomy" id="59409"/>
    <lineage>
        <taxon>Eukaryota</taxon>
        <taxon>Metazoa</taxon>
        <taxon>Chordata</taxon>
        <taxon>Craniata</taxon>
        <taxon>Vertebrata</taxon>
        <taxon>Euteleostomi</taxon>
        <taxon>Archelosauria</taxon>
        <taxon>Archosauria</taxon>
        <taxon>Dinosauria</taxon>
        <taxon>Saurischia</taxon>
        <taxon>Theropoda</taxon>
        <taxon>Coelurosauria</taxon>
        <taxon>Aves</taxon>
        <taxon>Neognathae</taxon>
        <taxon>Neoaves</taxon>
        <taxon>Telluraves</taxon>
        <taxon>Coraciimorphae</taxon>
        <taxon>Trogoniformes</taxon>
        <taxon>Trogonidae</taxon>
        <taxon>Harpactes</taxon>
    </lineage>
</organism>
<feature type="chain" id="PRO_0000061025" description="Cytochrome b">
    <location>
        <begin position="1"/>
        <end position="380"/>
    </location>
</feature>
<feature type="transmembrane region" description="Helical" evidence="2">
    <location>
        <begin position="34"/>
        <end position="54"/>
    </location>
</feature>
<feature type="transmembrane region" description="Helical" evidence="2">
    <location>
        <begin position="78"/>
        <end position="99"/>
    </location>
</feature>
<feature type="transmembrane region" description="Helical" evidence="2">
    <location>
        <begin position="114"/>
        <end position="134"/>
    </location>
</feature>
<feature type="transmembrane region" description="Helical" evidence="2">
    <location>
        <begin position="179"/>
        <end position="199"/>
    </location>
</feature>
<feature type="transmembrane region" description="Helical" evidence="2">
    <location>
        <begin position="227"/>
        <end position="247"/>
    </location>
</feature>
<feature type="transmembrane region" description="Helical" evidence="2">
    <location>
        <begin position="289"/>
        <end position="309"/>
    </location>
</feature>
<feature type="transmembrane region" description="Helical" evidence="2">
    <location>
        <begin position="321"/>
        <end position="341"/>
    </location>
</feature>
<feature type="transmembrane region" description="Helical" evidence="2">
    <location>
        <begin position="348"/>
        <end position="368"/>
    </location>
</feature>
<feature type="binding site" description="axial binding residue" evidence="2">
    <location>
        <position position="84"/>
    </location>
    <ligand>
        <name>heme b</name>
        <dbReference type="ChEBI" id="CHEBI:60344"/>
        <label>b562</label>
    </ligand>
    <ligandPart>
        <name>Fe</name>
        <dbReference type="ChEBI" id="CHEBI:18248"/>
    </ligandPart>
</feature>
<feature type="binding site" description="axial binding residue" evidence="2">
    <location>
        <position position="98"/>
    </location>
    <ligand>
        <name>heme b</name>
        <dbReference type="ChEBI" id="CHEBI:60344"/>
        <label>b566</label>
    </ligand>
    <ligandPart>
        <name>Fe</name>
        <dbReference type="ChEBI" id="CHEBI:18248"/>
    </ligandPart>
</feature>
<feature type="binding site" description="axial binding residue" evidence="2">
    <location>
        <position position="183"/>
    </location>
    <ligand>
        <name>heme b</name>
        <dbReference type="ChEBI" id="CHEBI:60344"/>
        <label>b562</label>
    </ligand>
    <ligandPart>
        <name>Fe</name>
        <dbReference type="ChEBI" id="CHEBI:18248"/>
    </ligandPart>
</feature>
<feature type="binding site" description="axial binding residue" evidence="2">
    <location>
        <position position="197"/>
    </location>
    <ligand>
        <name>heme b</name>
        <dbReference type="ChEBI" id="CHEBI:60344"/>
        <label>b566</label>
    </ligand>
    <ligandPart>
        <name>Fe</name>
        <dbReference type="ChEBI" id="CHEBI:18248"/>
    </ligandPart>
</feature>
<feature type="binding site" evidence="2">
    <location>
        <position position="202"/>
    </location>
    <ligand>
        <name>a ubiquinone</name>
        <dbReference type="ChEBI" id="CHEBI:16389"/>
    </ligand>
</feature>
<geneLocation type="mitochondrion"/>
<name>CYB_HARDI</name>
<protein>
    <recommendedName>
        <fullName>Cytochrome b</fullName>
    </recommendedName>
    <alternativeName>
        <fullName>Complex III subunit 3</fullName>
    </alternativeName>
    <alternativeName>
        <fullName>Complex III subunit III</fullName>
    </alternativeName>
    <alternativeName>
        <fullName>Cytochrome b-c1 complex subunit 3</fullName>
    </alternativeName>
    <alternativeName>
        <fullName>Ubiquinol-cytochrome-c reductase complex cytochrome b subunit</fullName>
    </alternativeName>
</protein>
<gene>
    <name type="primary">MT-CYB</name>
    <name type="synonym">COB</name>
    <name type="synonym">CYTB</name>
    <name type="synonym">MTCYB</name>
</gene>